<evidence type="ECO:0000255" key="1">
    <source>
        <dbReference type="HAMAP-Rule" id="MF_01633"/>
    </source>
</evidence>
<feature type="chain" id="PRO_1000088157" description="7-cyano-7-deazaguanine synthase">
    <location>
        <begin position="1"/>
        <end position="226"/>
    </location>
</feature>
<feature type="binding site" evidence="1">
    <location>
        <begin position="8"/>
        <end position="18"/>
    </location>
    <ligand>
        <name>ATP</name>
        <dbReference type="ChEBI" id="CHEBI:30616"/>
    </ligand>
</feature>
<feature type="binding site" evidence="1">
    <location>
        <position position="188"/>
    </location>
    <ligand>
        <name>Zn(2+)</name>
        <dbReference type="ChEBI" id="CHEBI:29105"/>
    </ligand>
</feature>
<feature type="binding site" evidence="1">
    <location>
        <position position="198"/>
    </location>
    <ligand>
        <name>Zn(2+)</name>
        <dbReference type="ChEBI" id="CHEBI:29105"/>
    </ligand>
</feature>
<feature type="binding site" evidence="1">
    <location>
        <position position="201"/>
    </location>
    <ligand>
        <name>Zn(2+)</name>
        <dbReference type="ChEBI" id="CHEBI:29105"/>
    </ligand>
</feature>
<feature type="binding site" evidence="1">
    <location>
        <position position="204"/>
    </location>
    <ligand>
        <name>Zn(2+)</name>
        <dbReference type="ChEBI" id="CHEBI:29105"/>
    </ligand>
</feature>
<reference key="1">
    <citation type="journal article" date="2007" name="Environ. Microbiol.">
        <title>Whole-genome analysis of the ammonia-oxidizing bacterium, Nitrosomonas eutropha C91: implications for niche adaptation.</title>
        <authorList>
            <person name="Stein L.Y."/>
            <person name="Arp D.J."/>
            <person name="Berube P.M."/>
            <person name="Chain P.S."/>
            <person name="Hauser L."/>
            <person name="Jetten M.S."/>
            <person name="Klotz M.G."/>
            <person name="Larimer F.W."/>
            <person name="Norton J.M."/>
            <person name="Op den Camp H.J.M."/>
            <person name="Shin M."/>
            <person name="Wei X."/>
        </authorList>
    </citation>
    <scope>NUCLEOTIDE SEQUENCE [LARGE SCALE GENOMIC DNA]</scope>
    <source>
        <strain>DSM 101675 / C91 / Nm57</strain>
    </source>
</reference>
<comment type="function">
    <text evidence="1">Catalyzes the ATP-dependent conversion of 7-carboxy-7-deazaguanine (CDG) to 7-cyano-7-deazaguanine (preQ(0)).</text>
</comment>
<comment type="catalytic activity">
    <reaction evidence="1">
        <text>7-carboxy-7-deazaguanine + NH4(+) + ATP = 7-cyano-7-deazaguanine + ADP + phosphate + H2O + H(+)</text>
        <dbReference type="Rhea" id="RHEA:27982"/>
        <dbReference type="ChEBI" id="CHEBI:15377"/>
        <dbReference type="ChEBI" id="CHEBI:15378"/>
        <dbReference type="ChEBI" id="CHEBI:28938"/>
        <dbReference type="ChEBI" id="CHEBI:30616"/>
        <dbReference type="ChEBI" id="CHEBI:43474"/>
        <dbReference type="ChEBI" id="CHEBI:45075"/>
        <dbReference type="ChEBI" id="CHEBI:61036"/>
        <dbReference type="ChEBI" id="CHEBI:456216"/>
        <dbReference type="EC" id="6.3.4.20"/>
    </reaction>
</comment>
<comment type="cofactor">
    <cofactor evidence="1">
        <name>Zn(2+)</name>
        <dbReference type="ChEBI" id="CHEBI:29105"/>
    </cofactor>
    <text evidence="1">Binds 1 zinc ion per subunit.</text>
</comment>
<comment type="pathway">
    <text evidence="1">Purine metabolism; 7-cyano-7-deazaguanine biosynthesis.</text>
</comment>
<comment type="similarity">
    <text evidence="1">Belongs to the QueC family.</text>
</comment>
<protein>
    <recommendedName>
        <fullName evidence="1">7-cyano-7-deazaguanine synthase</fullName>
        <ecNumber evidence="1">6.3.4.20</ecNumber>
    </recommendedName>
    <alternativeName>
        <fullName evidence="1">7-cyano-7-carbaguanine synthase</fullName>
    </alternativeName>
    <alternativeName>
        <fullName evidence="1">PreQ(0) synthase</fullName>
    </alternativeName>
    <alternativeName>
        <fullName evidence="1">Queuosine biosynthesis protein QueC</fullName>
    </alternativeName>
</protein>
<organism>
    <name type="scientific">Nitrosomonas eutropha (strain DSM 101675 / C91 / Nm57)</name>
    <dbReference type="NCBI Taxonomy" id="335283"/>
    <lineage>
        <taxon>Bacteria</taxon>
        <taxon>Pseudomonadati</taxon>
        <taxon>Pseudomonadota</taxon>
        <taxon>Betaproteobacteria</taxon>
        <taxon>Nitrosomonadales</taxon>
        <taxon>Nitrosomonadaceae</taxon>
        <taxon>Nitrosomonas</taxon>
    </lineage>
</organism>
<sequence length="226" mass="24303">MKKAVVLLSGGLDSTTTLAIARGNGFACYALSVDYGQRHAAELAAATRIGQLLQVCEHQFLKLDLTVLASSALTDPSVTVPIHGTNRGIPATYVPARNTIMLSLALAWAEVLGSQDIFIGVTAVDYSGYPDCRPDYIDAFEKMANLATKAGREGNLLKVHAPLINLPKHDIIRRGLELGIDYSMTVSCYQADASGWACGQCDACHIRRAGFAAANIPDPTYYQDKR</sequence>
<accession>Q0AJ94</accession>
<proteinExistence type="inferred from homology"/>
<name>QUEC_NITEC</name>
<dbReference type="EC" id="6.3.4.20" evidence="1"/>
<dbReference type="EMBL" id="CP000450">
    <property type="protein sequence ID" value="ABI58577.1"/>
    <property type="molecule type" value="Genomic_DNA"/>
</dbReference>
<dbReference type="RefSeq" id="WP_011633421.1">
    <property type="nucleotide sequence ID" value="NC_008344.1"/>
</dbReference>
<dbReference type="SMR" id="Q0AJ94"/>
<dbReference type="STRING" id="335283.Neut_0293"/>
<dbReference type="KEGG" id="net:Neut_0293"/>
<dbReference type="eggNOG" id="COG0603">
    <property type="taxonomic scope" value="Bacteria"/>
</dbReference>
<dbReference type="HOGENOM" id="CLU_081854_1_1_4"/>
<dbReference type="OrthoDB" id="9789567at2"/>
<dbReference type="UniPathway" id="UPA00391"/>
<dbReference type="Proteomes" id="UP000001966">
    <property type="component" value="Chromosome"/>
</dbReference>
<dbReference type="GO" id="GO:0005524">
    <property type="term" value="F:ATP binding"/>
    <property type="evidence" value="ECO:0007669"/>
    <property type="project" value="UniProtKB-UniRule"/>
</dbReference>
<dbReference type="GO" id="GO:0016879">
    <property type="term" value="F:ligase activity, forming carbon-nitrogen bonds"/>
    <property type="evidence" value="ECO:0007669"/>
    <property type="project" value="UniProtKB-UniRule"/>
</dbReference>
<dbReference type="GO" id="GO:0008270">
    <property type="term" value="F:zinc ion binding"/>
    <property type="evidence" value="ECO:0007669"/>
    <property type="project" value="UniProtKB-UniRule"/>
</dbReference>
<dbReference type="GO" id="GO:0008616">
    <property type="term" value="P:queuosine biosynthetic process"/>
    <property type="evidence" value="ECO:0007669"/>
    <property type="project" value="UniProtKB-UniRule"/>
</dbReference>
<dbReference type="CDD" id="cd01995">
    <property type="entry name" value="QueC-like"/>
    <property type="match status" value="1"/>
</dbReference>
<dbReference type="Gene3D" id="3.40.50.620">
    <property type="entry name" value="HUPs"/>
    <property type="match status" value="1"/>
</dbReference>
<dbReference type="HAMAP" id="MF_01633">
    <property type="entry name" value="QueC"/>
    <property type="match status" value="1"/>
</dbReference>
<dbReference type="InterPro" id="IPR018317">
    <property type="entry name" value="QueC"/>
</dbReference>
<dbReference type="InterPro" id="IPR014729">
    <property type="entry name" value="Rossmann-like_a/b/a_fold"/>
</dbReference>
<dbReference type="NCBIfam" id="TIGR00364">
    <property type="entry name" value="7-cyano-7-deazaguanine synthase QueC"/>
    <property type="match status" value="1"/>
</dbReference>
<dbReference type="PANTHER" id="PTHR42914">
    <property type="entry name" value="7-CYANO-7-DEAZAGUANINE SYNTHASE"/>
    <property type="match status" value="1"/>
</dbReference>
<dbReference type="PANTHER" id="PTHR42914:SF1">
    <property type="entry name" value="7-CYANO-7-DEAZAGUANINE SYNTHASE"/>
    <property type="match status" value="1"/>
</dbReference>
<dbReference type="Pfam" id="PF06508">
    <property type="entry name" value="QueC"/>
    <property type="match status" value="1"/>
</dbReference>
<dbReference type="PIRSF" id="PIRSF006293">
    <property type="entry name" value="ExsB"/>
    <property type="match status" value="1"/>
</dbReference>
<dbReference type="SUPFAM" id="SSF52402">
    <property type="entry name" value="Adenine nucleotide alpha hydrolases-like"/>
    <property type="match status" value="1"/>
</dbReference>
<gene>
    <name evidence="1" type="primary">queC</name>
    <name type="ordered locus">Neut_0293</name>
</gene>
<keyword id="KW-0067">ATP-binding</keyword>
<keyword id="KW-0436">Ligase</keyword>
<keyword id="KW-0479">Metal-binding</keyword>
<keyword id="KW-0547">Nucleotide-binding</keyword>
<keyword id="KW-0671">Queuosine biosynthesis</keyword>
<keyword id="KW-0862">Zinc</keyword>